<name>DAPH_PSELT</name>
<accession>A8F8L8</accession>
<reference key="1">
    <citation type="submission" date="2007-08" db="EMBL/GenBank/DDBJ databases">
        <title>Complete sequence of Thermotoga lettingae TMO.</title>
        <authorList>
            <consortium name="US DOE Joint Genome Institute"/>
            <person name="Copeland A."/>
            <person name="Lucas S."/>
            <person name="Lapidus A."/>
            <person name="Barry K."/>
            <person name="Glavina del Rio T."/>
            <person name="Dalin E."/>
            <person name="Tice H."/>
            <person name="Pitluck S."/>
            <person name="Foster B."/>
            <person name="Bruce D."/>
            <person name="Schmutz J."/>
            <person name="Larimer F."/>
            <person name="Land M."/>
            <person name="Hauser L."/>
            <person name="Kyrpides N."/>
            <person name="Mikhailova N."/>
            <person name="Nelson K."/>
            <person name="Gogarten J.P."/>
            <person name="Noll K."/>
            <person name="Richardson P."/>
        </authorList>
    </citation>
    <scope>NUCLEOTIDE SEQUENCE [LARGE SCALE GENOMIC DNA]</scope>
    <source>
        <strain>ATCC BAA-301 / DSM 14385 / NBRC 107922 / TMO</strain>
    </source>
</reference>
<gene>
    <name evidence="1" type="primary">dapH</name>
    <name type="ordered locus">Tlet_1948</name>
</gene>
<keyword id="KW-0012">Acyltransferase</keyword>
<keyword id="KW-0028">Amino-acid biosynthesis</keyword>
<keyword id="KW-0220">Diaminopimelate biosynthesis</keyword>
<keyword id="KW-0457">Lysine biosynthesis</keyword>
<keyword id="KW-1185">Reference proteome</keyword>
<keyword id="KW-0677">Repeat</keyword>
<keyword id="KW-0808">Transferase</keyword>
<feature type="chain" id="PRO_0000376728" description="2,3,4,5-tetrahydropyridine-2,6-dicarboxylate N-acetyltransferase">
    <location>
        <begin position="1"/>
        <end position="238"/>
    </location>
</feature>
<sequence length="238" mass="25244">MNNDLTADSIIEMISSSKKKTPVIAYVKGHLSDIDMSGVQFFGTDNFGIIFADYEDLRQFLEKNGNKIHDVHIEAKARNSALPMADITKFNARVEPGAVIRDLVKIGDGAVIMMGAIINVGAVIGEKTMIDMNAVIGGRAIIGRNCHIGAGAVIAGVIEPPSATPVVIEDNVMVGANAVVLEGVKVGKGSVVAAGAVVVSDVDPYTVVAGIPAKFIKKVDEKTIEKTKIIEILRQRDH</sequence>
<comment type="function">
    <text evidence="1">Catalyzes the transfer of an acetyl group from acetyl-CoA to tetrahydrodipicolinate.</text>
</comment>
<comment type="catalytic activity">
    <reaction evidence="1">
        <text>(S)-2,3,4,5-tetrahydrodipicolinate + acetyl-CoA + H2O = L-2-acetamido-6-oxoheptanedioate + CoA</text>
        <dbReference type="Rhea" id="RHEA:13085"/>
        <dbReference type="ChEBI" id="CHEBI:15377"/>
        <dbReference type="ChEBI" id="CHEBI:16845"/>
        <dbReference type="ChEBI" id="CHEBI:57287"/>
        <dbReference type="ChEBI" id="CHEBI:57288"/>
        <dbReference type="ChEBI" id="CHEBI:58117"/>
        <dbReference type="EC" id="2.3.1.89"/>
    </reaction>
</comment>
<comment type="pathway">
    <text evidence="1">Amino-acid biosynthesis; L-lysine biosynthesis via DAP pathway; LL-2,6-diaminopimelate from (S)-tetrahydrodipicolinate (acetylase route): step 1/3.</text>
</comment>
<comment type="similarity">
    <text evidence="1">Belongs to the transferase hexapeptide repeat family. DapH subfamily.</text>
</comment>
<comment type="sequence caution" evidence="2">
    <conflict type="erroneous initiation">
        <sequence resource="EMBL-CDS" id="ABV34502"/>
    </conflict>
</comment>
<organism>
    <name type="scientific">Pseudothermotoga lettingae (strain ATCC BAA-301 / DSM 14385 / NBRC 107922 / TMO)</name>
    <name type="common">Thermotoga lettingae</name>
    <dbReference type="NCBI Taxonomy" id="416591"/>
    <lineage>
        <taxon>Bacteria</taxon>
        <taxon>Thermotogati</taxon>
        <taxon>Thermotogota</taxon>
        <taxon>Thermotogae</taxon>
        <taxon>Thermotogales</taxon>
        <taxon>Thermotogaceae</taxon>
        <taxon>Pseudothermotoga</taxon>
    </lineage>
</organism>
<proteinExistence type="inferred from homology"/>
<protein>
    <recommendedName>
        <fullName evidence="1">2,3,4,5-tetrahydropyridine-2,6-dicarboxylate N-acetyltransferase</fullName>
        <ecNumber evidence="1">2.3.1.89</ecNumber>
    </recommendedName>
    <alternativeName>
        <fullName evidence="1">Tetrahydrodipicolinate N-acetyltransferase</fullName>
        <shortName evidence="1">THP acetyltransferase</shortName>
        <shortName evidence="1">Tetrahydropicolinate acetylase</shortName>
    </alternativeName>
</protein>
<dbReference type="EC" id="2.3.1.89" evidence="1"/>
<dbReference type="EMBL" id="CP000812">
    <property type="protein sequence ID" value="ABV34502.1"/>
    <property type="status" value="ALT_INIT"/>
    <property type="molecule type" value="Genomic_DNA"/>
</dbReference>
<dbReference type="SMR" id="A8F8L8"/>
<dbReference type="STRING" id="416591.Tlet_1948"/>
<dbReference type="KEGG" id="tle:Tlet_1948"/>
<dbReference type="eggNOG" id="COG2171">
    <property type="taxonomic scope" value="Bacteria"/>
</dbReference>
<dbReference type="HOGENOM" id="CLU_103751_0_0_0"/>
<dbReference type="OrthoDB" id="9788080at2"/>
<dbReference type="UniPathway" id="UPA00034">
    <property type="reaction ID" value="UER00022"/>
</dbReference>
<dbReference type="Proteomes" id="UP000002016">
    <property type="component" value="Chromosome"/>
</dbReference>
<dbReference type="GO" id="GO:0047200">
    <property type="term" value="F:tetrahydrodipicolinate N-acetyltransferase activity"/>
    <property type="evidence" value="ECO:0007669"/>
    <property type="project" value="UniProtKB-EC"/>
</dbReference>
<dbReference type="GO" id="GO:0019877">
    <property type="term" value="P:diaminopimelate biosynthetic process"/>
    <property type="evidence" value="ECO:0007669"/>
    <property type="project" value="UniProtKB-UniRule"/>
</dbReference>
<dbReference type="GO" id="GO:0009089">
    <property type="term" value="P:lysine biosynthetic process via diaminopimelate"/>
    <property type="evidence" value="ECO:0007669"/>
    <property type="project" value="UniProtKB-UniRule"/>
</dbReference>
<dbReference type="CDD" id="cd03350">
    <property type="entry name" value="LbH_THP_succinylT"/>
    <property type="match status" value="1"/>
</dbReference>
<dbReference type="Gene3D" id="2.160.10.10">
    <property type="entry name" value="Hexapeptide repeat proteins"/>
    <property type="match status" value="1"/>
</dbReference>
<dbReference type="Gene3D" id="3.30.70.250">
    <property type="entry name" value="Malonyl-CoA ACP transacylase, ACP-binding"/>
    <property type="match status" value="1"/>
</dbReference>
<dbReference type="HAMAP" id="MF_01691">
    <property type="entry name" value="DapH"/>
    <property type="match status" value="1"/>
</dbReference>
<dbReference type="InterPro" id="IPR019873">
    <property type="entry name" value="DapH"/>
</dbReference>
<dbReference type="InterPro" id="IPR013710">
    <property type="entry name" value="DapH_N"/>
</dbReference>
<dbReference type="InterPro" id="IPR001451">
    <property type="entry name" value="Hexapep"/>
</dbReference>
<dbReference type="InterPro" id="IPR018357">
    <property type="entry name" value="Hexapep_transf_CS"/>
</dbReference>
<dbReference type="InterPro" id="IPR050179">
    <property type="entry name" value="Trans_hexapeptide_repeat"/>
</dbReference>
<dbReference type="InterPro" id="IPR011004">
    <property type="entry name" value="Trimer_LpxA-like_sf"/>
</dbReference>
<dbReference type="NCBIfam" id="TIGR03532">
    <property type="entry name" value="DapD_Ac"/>
    <property type="match status" value="1"/>
</dbReference>
<dbReference type="PANTHER" id="PTHR43300:SF10">
    <property type="entry name" value="2,3,4,5-TETRAHYDROPYRIDINE-2,6-DICARBOXYLATE N-ACETYLTRANSFERASE"/>
    <property type="match status" value="1"/>
</dbReference>
<dbReference type="PANTHER" id="PTHR43300">
    <property type="entry name" value="ACETYLTRANSFERASE"/>
    <property type="match status" value="1"/>
</dbReference>
<dbReference type="Pfam" id="PF08503">
    <property type="entry name" value="DapH_N"/>
    <property type="match status" value="1"/>
</dbReference>
<dbReference type="Pfam" id="PF00132">
    <property type="entry name" value="Hexapep"/>
    <property type="match status" value="1"/>
</dbReference>
<dbReference type="Pfam" id="PF14602">
    <property type="entry name" value="Hexapep_2"/>
    <property type="match status" value="1"/>
</dbReference>
<dbReference type="SUPFAM" id="SSF51161">
    <property type="entry name" value="Trimeric LpxA-like enzymes"/>
    <property type="match status" value="1"/>
</dbReference>
<dbReference type="PROSITE" id="PS00101">
    <property type="entry name" value="HEXAPEP_TRANSFERASES"/>
    <property type="match status" value="1"/>
</dbReference>
<evidence type="ECO:0000255" key="1">
    <source>
        <dbReference type="HAMAP-Rule" id="MF_01691"/>
    </source>
</evidence>
<evidence type="ECO:0000305" key="2"/>